<reference key="1">
    <citation type="submission" date="1997-03" db="EMBL/GenBank/DDBJ databases">
        <authorList>
            <person name="Cousinou M."/>
            <person name="Lopez-Barea J."/>
            <person name="Dorado G."/>
        </authorList>
    </citation>
    <scope>NUCLEOTIDE SEQUENCE [MRNA]</scope>
    <source>
        <tissue>Liver</tissue>
    </source>
</reference>
<gene>
    <name type="primary">mt</name>
</gene>
<feature type="chain" id="PRO_0000197290" description="Metallothionein">
    <location>
        <begin position="1"/>
        <end position="60"/>
    </location>
</feature>
<feature type="region of interest" description="Beta">
    <location>
        <begin position="1"/>
        <end position="28"/>
    </location>
</feature>
<feature type="region of interest" description="Alpha">
    <location>
        <begin position="29"/>
        <end position="60"/>
    </location>
</feature>
<feature type="binding site" evidence="2">
    <location>
        <position position="4"/>
    </location>
    <ligand>
        <name>a divalent metal cation</name>
        <dbReference type="ChEBI" id="CHEBI:60240"/>
        <label>1</label>
        <note>in cluster B</note>
    </ligand>
</feature>
<feature type="binding site" evidence="2">
    <location>
        <position position="6"/>
    </location>
    <ligand>
        <name>a divalent metal cation</name>
        <dbReference type="ChEBI" id="CHEBI:60240"/>
        <label>1</label>
        <note>in cluster B</note>
    </ligand>
</feature>
<feature type="binding site" evidence="2">
    <location>
        <position position="6"/>
    </location>
    <ligand>
        <name>a divalent metal cation</name>
        <dbReference type="ChEBI" id="CHEBI:60240"/>
        <label>2</label>
        <note>in cluster B</note>
    </ligand>
</feature>
<feature type="binding site" evidence="2">
    <location>
        <position position="12"/>
    </location>
    <ligand>
        <name>a divalent metal cation</name>
        <dbReference type="ChEBI" id="CHEBI:60240"/>
        <label>2</label>
        <note>in cluster B</note>
    </ligand>
</feature>
<feature type="binding site" evidence="2">
    <location>
        <position position="14"/>
    </location>
    <ligand>
        <name>a divalent metal cation</name>
        <dbReference type="ChEBI" id="CHEBI:60240"/>
        <label>2</label>
        <note>in cluster B</note>
    </ligand>
</feature>
<feature type="binding site" evidence="2">
    <location>
        <position position="14"/>
    </location>
    <ligand>
        <name>a divalent metal cation</name>
        <dbReference type="ChEBI" id="CHEBI:60240"/>
        <label>3</label>
        <note>in cluster B</note>
    </ligand>
</feature>
<feature type="binding site" evidence="2">
    <location>
        <position position="18"/>
    </location>
    <ligand>
        <name>a divalent metal cation</name>
        <dbReference type="ChEBI" id="CHEBI:60240"/>
        <label>3</label>
        <note>in cluster B</note>
    </ligand>
</feature>
<feature type="binding site" evidence="2">
    <location>
        <position position="20"/>
    </location>
    <ligand>
        <name>a divalent metal cation</name>
        <dbReference type="ChEBI" id="CHEBI:60240"/>
        <label>1</label>
        <note>in cluster B</note>
    </ligand>
</feature>
<feature type="binding site" evidence="2">
    <location>
        <position position="23"/>
    </location>
    <ligand>
        <name>a divalent metal cation</name>
        <dbReference type="ChEBI" id="CHEBI:60240"/>
        <label>1</label>
        <note>in cluster B</note>
    </ligand>
</feature>
<feature type="binding site" evidence="2">
    <location>
        <position position="23"/>
    </location>
    <ligand>
        <name>a divalent metal cation</name>
        <dbReference type="ChEBI" id="CHEBI:60240"/>
        <label>3</label>
        <note>in cluster B</note>
    </ligand>
</feature>
<feature type="binding site" evidence="2">
    <location>
        <position position="25"/>
    </location>
    <ligand>
        <name>a divalent metal cation</name>
        <dbReference type="ChEBI" id="CHEBI:60240"/>
        <label>2</label>
        <note>in cluster B</note>
    </ligand>
</feature>
<feature type="binding site" evidence="2">
    <location>
        <position position="28"/>
    </location>
    <ligand>
        <name>a divalent metal cation</name>
        <dbReference type="ChEBI" id="CHEBI:60240"/>
        <label>3</label>
        <note>in cluster B</note>
    </ligand>
</feature>
<feature type="binding site" evidence="2">
    <location>
        <position position="32"/>
    </location>
    <ligand>
        <name>a divalent metal cation</name>
        <dbReference type="ChEBI" id="CHEBI:60240"/>
        <label>4</label>
        <note>in cluster A</note>
    </ligand>
</feature>
<feature type="binding site" evidence="2">
    <location>
        <position position="33"/>
    </location>
    <ligand>
        <name>a divalent metal cation</name>
        <dbReference type="ChEBI" id="CHEBI:60240"/>
        <label>4</label>
        <note>in cluster A</note>
    </ligand>
</feature>
<feature type="binding site" evidence="2">
    <location>
        <position position="33"/>
    </location>
    <ligand>
        <name>a divalent metal cation</name>
        <dbReference type="ChEBI" id="CHEBI:60240"/>
        <label>5</label>
        <note>in cluster A</note>
    </ligand>
</feature>
<feature type="binding site" evidence="2">
    <location>
        <position position="35"/>
    </location>
    <ligand>
        <name>a divalent metal cation</name>
        <dbReference type="ChEBI" id="CHEBI:60240"/>
        <label>5</label>
        <note>in cluster A</note>
    </ligand>
</feature>
<feature type="binding site" evidence="2">
    <location>
        <position position="36"/>
    </location>
    <ligand>
        <name>a divalent metal cation</name>
        <dbReference type="ChEBI" id="CHEBI:60240"/>
        <label>5</label>
        <note>in cluster A</note>
    </ligand>
</feature>
<feature type="binding site" evidence="2">
    <location>
        <position position="36"/>
    </location>
    <ligand>
        <name>a divalent metal cation</name>
        <dbReference type="ChEBI" id="CHEBI:60240"/>
        <label>6</label>
        <note>in cluster A</note>
    </ligand>
</feature>
<feature type="binding site" evidence="2">
    <location>
        <position position="40"/>
    </location>
    <ligand>
        <name>a divalent metal cation</name>
        <dbReference type="ChEBI" id="CHEBI:60240"/>
        <label>6</label>
        <note>in cluster A</note>
    </ligand>
</feature>
<feature type="binding site" evidence="2">
    <location>
        <position position="43"/>
    </location>
    <ligand>
        <name>a divalent metal cation</name>
        <dbReference type="ChEBI" id="CHEBI:60240"/>
        <label>4</label>
        <note>in cluster A</note>
    </ligand>
</feature>
<feature type="binding site" evidence="2">
    <location>
        <position position="43"/>
    </location>
    <ligand>
        <name>a divalent metal cation</name>
        <dbReference type="ChEBI" id="CHEBI:60240"/>
        <label>6</label>
        <note>in cluster A</note>
    </ligand>
</feature>
<feature type="binding site" evidence="2">
    <location>
        <position position="47"/>
    </location>
    <ligand>
        <name>a divalent metal cation</name>
        <dbReference type="ChEBI" id="CHEBI:60240"/>
        <label>4</label>
        <note>in cluster A</note>
    </ligand>
</feature>
<feature type="binding site" evidence="2">
    <location>
        <position position="49"/>
    </location>
    <ligand>
        <name>a divalent metal cation</name>
        <dbReference type="ChEBI" id="CHEBI:60240"/>
        <label>5</label>
        <note>in cluster A</note>
    </ligand>
</feature>
<feature type="binding site" evidence="2">
    <location>
        <position position="49"/>
    </location>
    <ligand>
        <name>a divalent metal cation</name>
        <dbReference type="ChEBI" id="CHEBI:60240"/>
        <label>7</label>
        <note>in cluster A</note>
    </ligand>
</feature>
<feature type="binding site" evidence="3">
    <location>
        <position position="54"/>
    </location>
    <ligand>
        <name>a divalent metal cation</name>
        <dbReference type="ChEBI" id="CHEBI:60240"/>
        <label>7</label>
        <note>in cluster A</note>
    </ligand>
</feature>
<feature type="binding site" evidence="2">
    <location>
        <position position="58"/>
    </location>
    <ligand>
        <name>a divalent metal cation</name>
        <dbReference type="ChEBI" id="CHEBI:60240"/>
        <label>7</label>
        <note>in cluster A</note>
    </ligand>
</feature>
<feature type="binding site" evidence="2">
    <location>
        <position position="59"/>
    </location>
    <ligand>
        <name>a divalent metal cation</name>
        <dbReference type="ChEBI" id="CHEBI:60240"/>
        <label>6</label>
        <note>in cluster A</note>
    </ligand>
</feature>
<feature type="binding site" evidence="2">
    <location>
        <position position="59"/>
    </location>
    <ligand>
        <name>a divalent metal cation</name>
        <dbReference type="ChEBI" id="CHEBI:60240"/>
        <label>7</label>
        <note>in cluster A</note>
    </ligand>
</feature>
<comment type="function">
    <text evidence="1">Metallothioneins have a high content of cysteine residues that bind various heavy metals.</text>
</comment>
<comment type="domain">
    <text>Class I metallothioneins contain 2 metal-binding domains: four divalent ions are chelated within cluster A of the alpha domain and are coordinated via cysteinyl thiolate bridges to 11 cysteine ligands. Cluster B, the corresponding region within the beta domain, can ligate three divalent ions to 9 cysteines.</text>
</comment>
<comment type="similarity">
    <text evidence="4">Belongs to the metallothionein superfamily. Type 1 family.</text>
</comment>
<evidence type="ECO:0000250" key="1"/>
<evidence type="ECO:0000250" key="2">
    <source>
        <dbReference type="UniProtKB" id="P02795"/>
    </source>
</evidence>
<evidence type="ECO:0000250" key="3">
    <source>
        <dbReference type="UniProtKB" id="P62339"/>
    </source>
</evidence>
<evidence type="ECO:0000305" key="4"/>
<keyword id="KW-0479">Metal-binding</keyword>
<keyword id="KW-0480">Metal-thiolate cluster</keyword>
<dbReference type="EMBL" id="U93207">
    <property type="protein sequence ID" value="AAB51591.1"/>
    <property type="molecule type" value="mRNA"/>
</dbReference>
<dbReference type="SMR" id="O13257"/>
<dbReference type="GO" id="GO:0046872">
    <property type="term" value="F:metal ion binding"/>
    <property type="evidence" value="ECO:0007669"/>
    <property type="project" value="UniProtKB-KW"/>
</dbReference>
<dbReference type="FunFam" id="4.10.10.10:FF:000001">
    <property type="entry name" value="Metallothionein"/>
    <property type="match status" value="1"/>
</dbReference>
<dbReference type="Gene3D" id="4.10.10.10">
    <property type="entry name" value="Metallothionein Isoform II"/>
    <property type="match status" value="1"/>
</dbReference>
<dbReference type="InterPro" id="IPR017854">
    <property type="entry name" value="Metalthion_dom_sf"/>
</dbReference>
<dbReference type="InterPro" id="IPR023587">
    <property type="entry name" value="Metalthion_dom_sf_vert"/>
</dbReference>
<dbReference type="InterPro" id="IPR000006">
    <property type="entry name" value="Metalthion_vert"/>
</dbReference>
<dbReference type="InterPro" id="IPR018064">
    <property type="entry name" value="Metalthion_vert_metal_BS"/>
</dbReference>
<dbReference type="PANTHER" id="PTHR23299">
    <property type="entry name" value="METALLOTHIONEIN"/>
    <property type="match status" value="1"/>
</dbReference>
<dbReference type="PANTHER" id="PTHR23299:SF24">
    <property type="entry name" value="METALLOTHIONEIN-1X"/>
    <property type="match status" value="1"/>
</dbReference>
<dbReference type="Pfam" id="PF00131">
    <property type="entry name" value="Metallothio"/>
    <property type="match status" value="1"/>
</dbReference>
<dbReference type="PRINTS" id="PR00860">
    <property type="entry name" value="MTVERTEBRATE"/>
</dbReference>
<dbReference type="SUPFAM" id="SSF57868">
    <property type="entry name" value="Metallothionein"/>
    <property type="match status" value="1"/>
</dbReference>
<dbReference type="PROSITE" id="PS00203">
    <property type="entry name" value="METALLOTHIONEIN_VRT"/>
    <property type="match status" value="1"/>
</dbReference>
<accession>O13257</accession>
<protein>
    <recommendedName>
        <fullName>Metallothionein</fullName>
        <shortName>MT</shortName>
    </recommendedName>
</protein>
<sequence>MDPCECSKTGKCSCGGSCTCTNCSCTSCKKSCCPCCPSGCSKCASGCVCKGKTCDTSCCQ</sequence>
<organism>
    <name type="scientific">Chelon auratus</name>
    <name type="common">Golden grey mullet</name>
    <name type="synonym">Liza aurata</name>
    <dbReference type="NCBI Taxonomy" id="48191"/>
    <lineage>
        <taxon>Eukaryota</taxon>
        <taxon>Metazoa</taxon>
        <taxon>Chordata</taxon>
        <taxon>Craniata</taxon>
        <taxon>Vertebrata</taxon>
        <taxon>Euteleostomi</taxon>
        <taxon>Actinopterygii</taxon>
        <taxon>Neopterygii</taxon>
        <taxon>Teleostei</taxon>
        <taxon>Neoteleostei</taxon>
        <taxon>Acanthomorphata</taxon>
        <taxon>Ovalentaria</taxon>
        <taxon>Mugilomorphae</taxon>
        <taxon>Mugilidae</taxon>
        <taxon>Chelon</taxon>
    </lineage>
</organism>
<name>MT_CHEAU</name>
<proteinExistence type="inferred from homology"/>